<gene>
    <name evidence="4" type="primary">Kics2</name>
</gene>
<proteinExistence type="evidence at protein level"/>
<feature type="chain" id="PRO_0000321903" description="KICSTOR subunit 2">
    <location>
        <begin position="1"/>
        <end position="445"/>
    </location>
</feature>
<feature type="splice variant" id="VSP_031819" description="In isoform 2." evidence="2">
    <original>GQSFFSRKDSIRTIYTSLHNELKKVVAGRGAPGGTAPHVEELLPHLSEQLCFFVQARMEIADFYEKMYALSTQKFINTEELVSTLDTILR</original>
    <variation>TSAPPLPLRRKERGCAAWSAWLGCLVTPSGRLHSAQVSSHRCPFFPSVPQAPPTGLCHRCLGGLGGCSSLGMLQTPWVYGFAPCMDWFHK</variation>
    <location>
        <begin position="80"/>
        <end position="169"/>
    </location>
</feature>
<feature type="splice variant" id="VSP_031820" description="In isoform 2." evidence="2">
    <location>
        <begin position="170"/>
        <end position="445"/>
    </location>
</feature>
<feature type="sequence conflict" description="In Ref. 1; BAC39804." evidence="3" ref="1">
    <original>M</original>
    <variation>V</variation>
    <location>
        <position position="368"/>
    </location>
</feature>
<feature type="helix" evidence="5">
    <location>
        <begin position="132"/>
        <end position="148"/>
    </location>
</feature>
<feature type="helix" evidence="5">
    <location>
        <begin position="149"/>
        <end position="151"/>
    </location>
</feature>
<feature type="strand" evidence="5">
    <location>
        <begin position="152"/>
        <end position="154"/>
    </location>
</feature>
<feature type="helix" evidence="5">
    <location>
        <begin position="157"/>
        <end position="164"/>
    </location>
</feature>
<feature type="turn" evidence="5">
    <location>
        <begin position="166"/>
        <end position="168"/>
    </location>
</feature>
<feature type="helix" evidence="5">
    <location>
        <begin position="169"/>
        <end position="171"/>
    </location>
</feature>
<feature type="helix" evidence="5">
    <location>
        <begin position="183"/>
        <end position="204"/>
    </location>
</feature>
<feature type="turn" evidence="5">
    <location>
        <begin position="205"/>
        <end position="207"/>
    </location>
</feature>
<feature type="helix" evidence="5">
    <location>
        <begin position="209"/>
        <end position="231"/>
    </location>
</feature>
<feature type="helix" evidence="5">
    <location>
        <begin position="253"/>
        <end position="272"/>
    </location>
</feature>
<feature type="helix" evidence="5">
    <location>
        <begin position="274"/>
        <end position="279"/>
    </location>
</feature>
<feature type="helix" evidence="5">
    <location>
        <begin position="283"/>
        <end position="292"/>
    </location>
</feature>
<feature type="helix" evidence="5">
    <location>
        <begin position="297"/>
        <end position="308"/>
    </location>
</feature>
<feature type="strand" evidence="5">
    <location>
        <begin position="311"/>
        <end position="317"/>
    </location>
</feature>
<feature type="strand" evidence="5">
    <location>
        <begin position="348"/>
        <end position="355"/>
    </location>
</feature>
<feature type="helix" evidence="5">
    <location>
        <begin position="358"/>
        <end position="360"/>
    </location>
</feature>
<feature type="helix" evidence="5">
    <location>
        <begin position="361"/>
        <end position="370"/>
    </location>
</feature>
<feature type="helix" evidence="5">
    <location>
        <begin position="372"/>
        <end position="376"/>
    </location>
</feature>
<feature type="strand" evidence="5">
    <location>
        <begin position="381"/>
        <end position="386"/>
    </location>
</feature>
<feature type="turn" evidence="5">
    <location>
        <begin position="387"/>
        <end position="390"/>
    </location>
</feature>
<feature type="strand" evidence="5">
    <location>
        <begin position="391"/>
        <end position="399"/>
    </location>
</feature>
<feature type="strand" evidence="5">
    <location>
        <begin position="402"/>
        <end position="410"/>
    </location>
</feature>
<feature type="helix" evidence="5">
    <location>
        <begin position="417"/>
        <end position="428"/>
    </location>
</feature>
<feature type="helix" evidence="5">
    <location>
        <begin position="432"/>
        <end position="437"/>
    </location>
</feature>
<sequence>MGESIPLAAPVPVEQAVLETFFSHLGIFSYDKAKDNVEKEREANKSAGGSWLSLLAALAHLAAAEKVYHSLTYLGQKLGGQSFFSRKDSIRTIYTSLHNELKKVVAGRGAPGGTAPHVEELLPHLSEQLCFFVQARMEIADFYEKMYALSTQKFINTEELVSTLDTILRKYSSRFHHPILSPLESSFQLEVGVLSHLLKAQAQISEWKFLPSLVTLHNAHTKLQSWGQTFEKQRETKKHLFGGQSQKAVQPPHLFLWLMKLKTMLLAKFSFYFHEALSRQTTASEMKALTAKANPDLFGKISSFIRKYDAANVSLIFDNRGSESFQGHGYHHPHSYREAPKGVDQYPAVVSLPSDRPVMHWPNVIMIMTDRASDLNSLEKVVHFYDDKVQSTYFLTRPEPHFTIVVIFESKKSERDSHFISFLNELSLALKNPKVFASLKPGSKG</sequence>
<keyword id="KW-0002">3D-structure</keyword>
<keyword id="KW-0025">Alternative splicing</keyword>
<keyword id="KW-0458">Lysosome</keyword>
<keyword id="KW-0472">Membrane</keyword>
<keyword id="KW-1185">Reference proteome</keyword>
<accession>Q6P1I3</accession>
<accession>Q3TE08</accession>
<accession>Q3TRB8</accession>
<accession>Q8C334</accession>
<protein>
    <recommendedName>
        <fullName evidence="4">KICSTOR subunit 2</fullName>
    </recommendedName>
</protein>
<dbReference type="EMBL" id="AK087110">
    <property type="protein sequence ID" value="BAC39804.1"/>
    <property type="status" value="ALT_FRAME"/>
    <property type="molecule type" value="mRNA"/>
</dbReference>
<dbReference type="EMBL" id="AK138662">
    <property type="protein sequence ID" value="BAE23738.1"/>
    <property type="molecule type" value="mRNA"/>
</dbReference>
<dbReference type="EMBL" id="AK162911">
    <property type="protein sequence ID" value="BAE37112.1"/>
    <property type="molecule type" value="mRNA"/>
</dbReference>
<dbReference type="EMBL" id="AK169891">
    <property type="protein sequence ID" value="BAE41440.1"/>
    <property type="status" value="ALT_FRAME"/>
    <property type="molecule type" value="mRNA"/>
</dbReference>
<dbReference type="EMBL" id="BC065058">
    <property type="protein sequence ID" value="AAH65058.1"/>
    <property type="molecule type" value="mRNA"/>
</dbReference>
<dbReference type="CCDS" id="CCDS24213.1">
    <molecule id="Q6P1I3-1"/>
</dbReference>
<dbReference type="RefSeq" id="NP_766610.2">
    <molecule id="Q6P1I3-1"/>
    <property type="nucleotide sequence ID" value="NM_173022.2"/>
</dbReference>
<dbReference type="PDB" id="2GNX">
    <property type="method" value="X-ray"/>
    <property type="resolution" value="2.45 A"/>
    <property type="chains" value="A=123-445"/>
</dbReference>
<dbReference type="PDBsum" id="2GNX"/>
<dbReference type="SMR" id="Q6P1I3"/>
<dbReference type="FunCoup" id="Q6P1I3">
    <property type="interactions" value="707"/>
</dbReference>
<dbReference type="STRING" id="10090.ENSMUSP00000070834"/>
<dbReference type="iPTMnet" id="Q6P1I3"/>
<dbReference type="PhosphoSitePlus" id="Q6P1I3"/>
<dbReference type="jPOST" id="Q6P1I3"/>
<dbReference type="PaxDb" id="10090-ENSMUSP00000070834"/>
<dbReference type="Antibodypedia" id="53140">
    <property type="antibodies" value="10 antibodies from 6 providers"/>
</dbReference>
<dbReference type="DNASU" id="270802"/>
<dbReference type="Ensembl" id="ENSMUST00000065600.8">
    <molecule id="Q6P1I3-1"/>
    <property type="protein sequence ID" value="ENSMUSP00000070834.8"/>
    <property type="gene ID" value="ENSMUSG00000053684.9"/>
</dbReference>
<dbReference type="GeneID" id="270802"/>
<dbReference type="KEGG" id="mmu:270802"/>
<dbReference type="UCSC" id="uc007hfx.1">
    <molecule id="Q6P1I3-1"/>
    <property type="organism name" value="mouse"/>
</dbReference>
<dbReference type="UCSC" id="uc007hfz.1">
    <molecule id="Q6P1I3-2"/>
    <property type="organism name" value="mouse"/>
</dbReference>
<dbReference type="AGR" id="MGI:2670984"/>
<dbReference type="CTD" id="144577"/>
<dbReference type="MGI" id="MGI:2670984">
    <property type="gene designation" value="Kics2"/>
</dbReference>
<dbReference type="VEuPathDB" id="HostDB:ENSMUSG00000053684"/>
<dbReference type="eggNOG" id="ENOG502QTBE">
    <property type="taxonomic scope" value="Eukaryota"/>
</dbReference>
<dbReference type="GeneTree" id="ENSGT00390000009583"/>
<dbReference type="InParanoid" id="Q6P1I3"/>
<dbReference type="OMA" id="PQKFINA"/>
<dbReference type="OrthoDB" id="18134at2759"/>
<dbReference type="PhylomeDB" id="Q6P1I3"/>
<dbReference type="TreeFam" id="TF329125"/>
<dbReference type="Reactome" id="R-MMU-9639288">
    <property type="pathway name" value="Amino acids regulate mTORC1"/>
</dbReference>
<dbReference type="BioGRID-ORCS" id="270802">
    <property type="hits" value="1 hit in 76 CRISPR screens"/>
</dbReference>
<dbReference type="EvolutionaryTrace" id="Q6P1I3"/>
<dbReference type="PRO" id="PR:Q6P1I3"/>
<dbReference type="Proteomes" id="UP000000589">
    <property type="component" value="Chromosome 10"/>
</dbReference>
<dbReference type="RNAct" id="Q6P1I3">
    <property type="molecule type" value="protein"/>
</dbReference>
<dbReference type="Bgee" id="ENSMUSG00000053684">
    <property type="expression patterns" value="Expressed in lumbar dorsal root ganglion and 176 other cell types or tissues"/>
</dbReference>
<dbReference type="ExpressionAtlas" id="Q6P1I3">
    <property type="expression patterns" value="baseline and differential"/>
</dbReference>
<dbReference type="GO" id="GO:0045171">
    <property type="term" value="C:intercellular bridge"/>
    <property type="evidence" value="ECO:0007669"/>
    <property type="project" value="Ensembl"/>
</dbReference>
<dbReference type="GO" id="GO:0140007">
    <property type="term" value="C:KICSTOR complex"/>
    <property type="evidence" value="ECO:0000250"/>
    <property type="project" value="UniProtKB"/>
</dbReference>
<dbReference type="GO" id="GO:0005765">
    <property type="term" value="C:lysosomal membrane"/>
    <property type="evidence" value="ECO:0007669"/>
    <property type="project" value="UniProtKB-SubCell"/>
</dbReference>
<dbReference type="GO" id="GO:0034198">
    <property type="term" value="P:cellular response to amino acid starvation"/>
    <property type="evidence" value="ECO:0000250"/>
    <property type="project" value="UniProtKB"/>
</dbReference>
<dbReference type="GO" id="GO:0042149">
    <property type="term" value="P:cellular response to glucose starvation"/>
    <property type="evidence" value="ECO:0000250"/>
    <property type="project" value="UniProtKB"/>
</dbReference>
<dbReference type="GO" id="GO:1904262">
    <property type="term" value="P:negative regulation of TORC1 signaling"/>
    <property type="evidence" value="ECO:0000250"/>
    <property type="project" value="UniProtKB"/>
</dbReference>
<dbReference type="GO" id="GO:0061462">
    <property type="term" value="P:protein localization to lysosome"/>
    <property type="evidence" value="ECO:0000250"/>
    <property type="project" value="UniProtKB"/>
</dbReference>
<dbReference type="FunFam" id="1.10.3450.30:FF:000001">
    <property type="entry name" value="KICSTOR complex protein C12orf66 homolog"/>
    <property type="match status" value="1"/>
</dbReference>
<dbReference type="Gene3D" id="1.10.3450.30">
    <property type="match status" value="1"/>
</dbReference>
<dbReference type="InterPro" id="IPR038060">
    <property type="entry name" value="C12orf66-like_central_sf"/>
</dbReference>
<dbReference type="InterPro" id="IPR018544">
    <property type="entry name" value="KICS_2"/>
</dbReference>
<dbReference type="PANTHER" id="PTHR31581">
    <property type="entry name" value="KICSTOR COMPLEX PROTEIN C12ORF66"/>
    <property type="match status" value="1"/>
</dbReference>
<dbReference type="PANTHER" id="PTHR31581:SF1">
    <property type="entry name" value="KICSTOR SUBUNIT 2"/>
    <property type="match status" value="1"/>
</dbReference>
<dbReference type="Pfam" id="PF09404">
    <property type="entry name" value="C12orf66_like"/>
    <property type="match status" value="1"/>
</dbReference>
<dbReference type="SUPFAM" id="SSF160651">
    <property type="entry name" value="FLJ32549 C-terminal domain-like"/>
    <property type="match status" value="1"/>
</dbReference>
<dbReference type="SUPFAM" id="SSF158548">
    <property type="entry name" value="FLJ32549 domain-like"/>
    <property type="match status" value="1"/>
</dbReference>
<comment type="function">
    <text evidence="1">As part of the KICSTOR complex functions in the amino acid-sensing branch of the TORC1 signaling pathway. Recruits, in an amino acid-independent manner, the GATOR1 complex to the lysosomal membranes and allows its interaction with GATOR2 and the RAG GTPases. Functions upstream of the RAG GTPases and is required to negatively regulate mTORC1 signaling in absence of amino acids. In absence of the KICSTOR complex mTORC1 is constitutively localized to the lysosome and activated. The KICSTOR complex is also probably involved in the regulation of mTORC1 by glucose.</text>
</comment>
<comment type="subunit">
    <text evidence="1">Part of the KICSTOR complex composed of KPTN, ITFG2, KICS2 and SZT2. SZT2 probably serves as a link between the other three proteins in the KICSTOR complex and may mediate the direct interaction with the GATOR complex via GATOR1. The KICSTOR complex interacts directly with the GATOR1 complex and most probably indirectly with the GATOR2 complex in an amino acid-independent manner.</text>
</comment>
<comment type="subcellular location">
    <subcellularLocation>
        <location evidence="1">Lysosome membrane</location>
    </subcellularLocation>
</comment>
<comment type="alternative products">
    <event type="alternative splicing"/>
    <isoform>
        <id>Q6P1I3-1</id>
        <name>1</name>
        <sequence type="displayed"/>
    </isoform>
    <isoform>
        <id>Q6P1I3-2</id>
        <name>2</name>
        <sequence type="described" ref="VSP_031819 VSP_031820"/>
    </isoform>
</comment>
<comment type="similarity">
    <text evidence="3">Belongs to the KICS2 family.</text>
</comment>
<comment type="sequence caution" evidence="3">
    <conflict type="frameshift">
        <sequence resource="EMBL-CDS" id="BAC39804"/>
    </conflict>
</comment>
<comment type="sequence caution" evidence="3">
    <conflict type="frameshift">
        <sequence resource="EMBL-CDS" id="BAE41440"/>
    </conflict>
</comment>
<reference key="1">
    <citation type="journal article" date="2005" name="Science">
        <title>The transcriptional landscape of the mammalian genome.</title>
        <authorList>
            <person name="Carninci P."/>
            <person name="Kasukawa T."/>
            <person name="Katayama S."/>
            <person name="Gough J."/>
            <person name="Frith M.C."/>
            <person name="Maeda N."/>
            <person name="Oyama R."/>
            <person name="Ravasi T."/>
            <person name="Lenhard B."/>
            <person name="Wells C."/>
            <person name="Kodzius R."/>
            <person name="Shimokawa K."/>
            <person name="Bajic V.B."/>
            <person name="Brenner S.E."/>
            <person name="Batalov S."/>
            <person name="Forrest A.R."/>
            <person name="Zavolan M."/>
            <person name="Davis M.J."/>
            <person name="Wilming L.G."/>
            <person name="Aidinis V."/>
            <person name="Allen J.E."/>
            <person name="Ambesi-Impiombato A."/>
            <person name="Apweiler R."/>
            <person name="Aturaliya R.N."/>
            <person name="Bailey T.L."/>
            <person name="Bansal M."/>
            <person name="Baxter L."/>
            <person name="Beisel K.W."/>
            <person name="Bersano T."/>
            <person name="Bono H."/>
            <person name="Chalk A.M."/>
            <person name="Chiu K.P."/>
            <person name="Choudhary V."/>
            <person name="Christoffels A."/>
            <person name="Clutterbuck D.R."/>
            <person name="Crowe M.L."/>
            <person name="Dalla E."/>
            <person name="Dalrymple B.P."/>
            <person name="de Bono B."/>
            <person name="Della Gatta G."/>
            <person name="di Bernardo D."/>
            <person name="Down T."/>
            <person name="Engstrom P."/>
            <person name="Fagiolini M."/>
            <person name="Faulkner G."/>
            <person name="Fletcher C.F."/>
            <person name="Fukushima T."/>
            <person name="Furuno M."/>
            <person name="Futaki S."/>
            <person name="Gariboldi M."/>
            <person name="Georgii-Hemming P."/>
            <person name="Gingeras T.R."/>
            <person name="Gojobori T."/>
            <person name="Green R.E."/>
            <person name="Gustincich S."/>
            <person name="Harbers M."/>
            <person name="Hayashi Y."/>
            <person name="Hensch T.K."/>
            <person name="Hirokawa N."/>
            <person name="Hill D."/>
            <person name="Huminiecki L."/>
            <person name="Iacono M."/>
            <person name="Ikeo K."/>
            <person name="Iwama A."/>
            <person name="Ishikawa T."/>
            <person name="Jakt M."/>
            <person name="Kanapin A."/>
            <person name="Katoh M."/>
            <person name="Kawasawa Y."/>
            <person name="Kelso J."/>
            <person name="Kitamura H."/>
            <person name="Kitano H."/>
            <person name="Kollias G."/>
            <person name="Krishnan S.P."/>
            <person name="Kruger A."/>
            <person name="Kummerfeld S.K."/>
            <person name="Kurochkin I.V."/>
            <person name="Lareau L.F."/>
            <person name="Lazarevic D."/>
            <person name="Lipovich L."/>
            <person name="Liu J."/>
            <person name="Liuni S."/>
            <person name="McWilliam S."/>
            <person name="Madan Babu M."/>
            <person name="Madera M."/>
            <person name="Marchionni L."/>
            <person name="Matsuda H."/>
            <person name="Matsuzawa S."/>
            <person name="Miki H."/>
            <person name="Mignone F."/>
            <person name="Miyake S."/>
            <person name="Morris K."/>
            <person name="Mottagui-Tabar S."/>
            <person name="Mulder N."/>
            <person name="Nakano N."/>
            <person name="Nakauchi H."/>
            <person name="Ng P."/>
            <person name="Nilsson R."/>
            <person name="Nishiguchi S."/>
            <person name="Nishikawa S."/>
            <person name="Nori F."/>
            <person name="Ohara O."/>
            <person name="Okazaki Y."/>
            <person name="Orlando V."/>
            <person name="Pang K.C."/>
            <person name="Pavan W.J."/>
            <person name="Pavesi G."/>
            <person name="Pesole G."/>
            <person name="Petrovsky N."/>
            <person name="Piazza S."/>
            <person name="Reed J."/>
            <person name="Reid J.F."/>
            <person name="Ring B.Z."/>
            <person name="Ringwald M."/>
            <person name="Rost B."/>
            <person name="Ruan Y."/>
            <person name="Salzberg S.L."/>
            <person name="Sandelin A."/>
            <person name="Schneider C."/>
            <person name="Schoenbach C."/>
            <person name="Sekiguchi K."/>
            <person name="Semple C.A."/>
            <person name="Seno S."/>
            <person name="Sessa L."/>
            <person name="Sheng Y."/>
            <person name="Shibata Y."/>
            <person name="Shimada H."/>
            <person name="Shimada K."/>
            <person name="Silva D."/>
            <person name="Sinclair B."/>
            <person name="Sperling S."/>
            <person name="Stupka E."/>
            <person name="Sugiura K."/>
            <person name="Sultana R."/>
            <person name="Takenaka Y."/>
            <person name="Taki K."/>
            <person name="Tammoja K."/>
            <person name="Tan S.L."/>
            <person name="Tang S."/>
            <person name="Taylor M.S."/>
            <person name="Tegner J."/>
            <person name="Teichmann S.A."/>
            <person name="Ueda H.R."/>
            <person name="van Nimwegen E."/>
            <person name="Verardo R."/>
            <person name="Wei C.L."/>
            <person name="Yagi K."/>
            <person name="Yamanishi H."/>
            <person name="Zabarovsky E."/>
            <person name="Zhu S."/>
            <person name="Zimmer A."/>
            <person name="Hide W."/>
            <person name="Bult C."/>
            <person name="Grimmond S.M."/>
            <person name="Teasdale R.D."/>
            <person name="Liu E.T."/>
            <person name="Brusic V."/>
            <person name="Quackenbush J."/>
            <person name="Wahlestedt C."/>
            <person name="Mattick J.S."/>
            <person name="Hume D.A."/>
            <person name="Kai C."/>
            <person name="Sasaki D."/>
            <person name="Tomaru Y."/>
            <person name="Fukuda S."/>
            <person name="Kanamori-Katayama M."/>
            <person name="Suzuki M."/>
            <person name="Aoki J."/>
            <person name="Arakawa T."/>
            <person name="Iida J."/>
            <person name="Imamura K."/>
            <person name="Itoh M."/>
            <person name="Kato T."/>
            <person name="Kawaji H."/>
            <person name="Kawagashira N."/>
            <person name="Kawashima T."/>
            <person name="Kojima M."/>
            <person name="Kondo S."/>
            <person name="Konno H."/>
            <person name="Nakano K."/>
            <person name="Ninomiya N."/>
            <person name="Nishio T."/>
            <person name="Okada M."/>
            <person name="Plessy C."/>
            <person name="Shibata K."/>
            <person name="Shiraki T."/>
            <person name="Suzuki S."/>
            <person name="Tagami M."/>
            <person name="Waki K."/>
            <person name="Watahiki A."/>
            <person name="Okamura-Oho Y."/>
            <person name="Suzuki H."/>
            <person name="Kawai J."/>
            <person name="Hayashizaki Y."/>
        </authorList>
    </citation>
    <scope>NUCLEOTIDE SEQUENCE [LARGE SCALE MRNA] (ISOFORMS 1 AND 2)</scope>
    <source>
        <strain>C57BL/6J</strain>
        <strain>NOD</strain>
        <tissue>Lung</tissue>
        <tissue>Spinal cord</tissue>
    </source>
</reference>
<reference key="2">
    <citation type="journal article" date="2004" name="Genome Res.">
        <title>The status, quality, and expansion of the NIH full-length cDNA project: the Mammalian Gene Collection (MGC).</title>
        <authorList>
            <consortium name="The MGC Project Team"/>
        </authorList>
    </citation>
    <scope>NUCLEOTIDE SEQUENCE [LARGE SCALE MRNA] (ISOFORM 1)</scope>
    <source>
        <strain>C57BL/6J</strain>
    </source>
</reference>
<reference key="3">
    <citation type="submission" date="2006-05" db="PDB data bank">
        <title>X-ray structure of a hypothetical protein from mouse mm.209172.</title>
        <authorList>
            <consortium name="Center for eukaryotic structural genomics (CESG)"/>
        </authorList>
    </citation>
    <scope>X-RAY CRYSTALLOGRAPHY (2.45 ANGSTROMS) OF 123-445</scope>
</reference>
<name>KICS2_MOUSE</name>
<evidence type="ECO:0000250" key="1">
    <source>
        <dbReference type="UniProtKB" id="Q96MD2"/>
    </source>
</evidence>
<evidence type="ECO:0000303" key="2">
    <source>
    </source>
</evidence>
<evidence type="ECO:0000305" key="3"/>
<evidence type="ECO:0000312" key="4">
    <source>
        <dbReference type="MGI" id="MGI:2670984"/>
    </source>
</evidence>
<evidence type="ECO:0007829" key="5">
    <source>
        <dbReference type="PDB" id="2GNX"/>
    </source>
</evidence>
<organism>
    <name type="scientific">Mus musculus</name>
    <name type="common">Mouse</name>
    <dbReference type="NCBI Taxonomy" id="10090"/>
    <lineage>
        <taxon>Eukaryota</taxon>
        <taxon>Metazoa</taxon>
        <taxon>Chordata</taxon>
        <taxon>Craniata</taxon>
        <taxon>Vertebrata</taxon>
        <taxon>Euteleostomi</taxon>
        <taxon>Mammalia</taxon>
        <taxon>Eutheria</taxon>
        <taxon>Euarchontoglires</taxon>
        <taxon>Glires</taxon>
        <taxon>Rodentia</taxon>
        <taxon>Myomorpha</taxon>
        <taxon>Muroidea</taxon>
        <taxon>Muridae</taxon>
        <taxon>Murinae</taxon>
        <taxon>Mus</taxon>
        <taxon>Mus</taxon>
    </lineage>
</organism>